<feature type="chain" id="PRO_0000176722" description="Small ribosomal subunit protein bS6">
    <location>
        <begin position="1"/>
        <end position="95"/>
    </location>
</feature>
<reference key="1">
    <citation type="journal article" date="2000" name="Nucleic Acids Res.">
        <title>Complete genome sequence of the alkaliphilic bacterium Bacillus halodurans and genomic sequence comparison with Bacillus subtilis.</title>
        <authorList>
            <person name="Takami H."/>
            <person name="Nakasone K."/>
            <person name="Takaki Y."/>
            <person name="Maeno G."/>
            <person name="Sasaki R."/>
            <person name="Masui N."/>
            <person name="Fuji F."/>
            <person name="Hirama C."/>
            <person name="Nakamura Y."/>
            <person name="Ogasawara N."/>
            <person name="Kuhara S."/>
            <person name="Horikoshi K."/>
        </authorList>
    </citation>
    <scope>NUCLEOTIDE SEQUENCE [LARGE SCALE GENOMIC DNA]</scope>
    <source>
        <strain>ATCC BAA-125 / DSM 18197 / FERM 7344 / JCM 9153 / C-125</strain>
    </source>
</reference>
<keyword id="KW-1185">Reference proteome</keyword>
<keyword id="KW-0687">Ribonucleoprotein</keyword>
<keyword id="KW-0689">Ribosomal protein</keyword>
<keyword id="KW-0694">RNA-binding</keyword>
<keyword id="KW-0699">rRNA-binding</keyword>
<evidence type="ECO:0000250" key="1"/>
<evidence type="ECO:0000305" key="2"/>
<name>RS6_HALH5</name>
<organism>
    <name type="scientific">Halalkalibacterium halodurans (strain ATCC BAA-125 / DSM 18197 / FERM 7344 / JCM 9153 / C-125)</name>
    <name type="common">Bacillus halodurans</name>
    <dbReference type="NCBI Taxonomy" id="272558"/>
    <lineage>
        <taxon>Bacteria</taxon>
        <taxon>Bacillati</taxon>
        <taxon>Bacillota</taxon>
        <taxon>Bacilli</taxon>
        <taxon>Bacillales</taxon>
        <taxon>Bacillaceae</taxon>
        <taxon>Halalkalibacterium (ex Joshi et al. 2022)</taxon>
    </lineage>
</organism>
<gene>
    <name type="primary">rpsF</name>
    <name type="ordered locus">BH4050</name>
</gene>
<sequence length="95" mass="11123">MRKYEIMYIIAPNLEEAANKEIIERFNGVLTNQGAEIEKVEEMGKRRLAYEINKFREGYYVLLNVKADADAIAEFNRLIKINDNVIRVLITKDEE</sequence>
<proteinExistence type="inferred from homology"/>
<accession>Q9K5N8</accession>
<protein>
    <recommendedName>
        <fullName evidence="2">Small ribosomal subunit protein bS6</fullName>
    </recommendedName>
    <alternativeName>
        <fullName>30S ribosomal protein S6</fullName>
    </alternativeName>
</protein>
<comment type="function">
    <text evidence="1">Binds together with bS18 to 16S ribosomal RNA.</text>
</comment>
<comment type="similarity">
    <text evidence="2">Belongs to the bacterial ribosomal protein bS6 family.</text>
</comment>
<dbReference type="EMBL" id="BA000004">
    <property type="protein sequence ID" value="BAB07769.1"/>
    <property type="molecule type" value="Genomic_DNA"/>
</dbReference>
<dbReference type="PIR" id="B84156">
    <property type="entry name" value="B84156"/>
</dbReference>
<dbReference type="RefSeq" id="WP_010900174.1">
    <property type="nucleotide sequence ID" value="NC_002570.2"/>
</dbReference>
<dbReference type="SMR" id="Q9K5N8"/>
<dbReference type="STRING" id="272558.gene:10729968"/>
<dbReference type="GeneID" id="87599633"/>
<dbReference type="KEGG" id="bha:BH4050"/>
<dbReference type="eggNOG" id="COG0360">
    <property type="taxonomic scope" value="Bacteria"/>
</dbReference>
<dbReference type="HOGENOM" id="CLU_113441_5_3_9"/>
<dbReference type="OrthoDB" id="9812702at2"/>
<dbReference type="Proteomes" id="UP000001258">
    <property type="component" value="Chromosome"/>
</dbReference>
<dbReference type="GO" id="GO:0005737">
    <property type="term" value="C:cytoplasm"/>
    <property type="evidence" value="ECO:0007669"/>
    <property type="project" value="UniProtKB-ARBA"/>
</dbReference>
<dbReference type="GO" id="GO:1990904">
    <property type="term" value="C:ribonucleoprotein complex"/>
    <property type="evidence" value="ECO:0007669"/>
    <property type="project" value="UniProtKB-KW"/>
</dbReference>
<dbReference type="GO" id="GO:0005840">
    <property type="term" value="C:ribosome"/>
    <property type="evidence" value="ECO:0007669"/>
    <property type="project" value="UniProtKB-KW"/>
</dbReference>
<dbReference type="GO" id="GO:0070181">
    <property type="term" value="F:small ribosomal subunit rRNA binding"/>
    <property type="evidence" value="ECO:0007669"/>
    <property type="project" value="TreeGrafter"/>
</dbReference>
<dbReference type="GO" id="GO:0003735">
    <property type="term" value="F:structural constituent of ribosome"/>
    <property type="evidence" value="ECO:0007669"/>
    <property type="project" value="InterPro"/>
</dbReference>
<dbReference type="GO" id="GO:0006412">
    <property type="term" value="P:translation"/>
    <property type="evidence" value="ECO:0007669"/>
    <property type="project" value="UniProtKB-UniRule"/>
</dbReference>
<dbReference type="CDD" id="cd00473">
    <property type="entry name" value="bS6"/>
    <property type="match status" value="1"/>
</dbReference>
<dbReference type="FunFam" id="3.30.70.60:FF:000002">
    <property type="entry name" value="30S ribosomal protein S6"/>
    <property type="match status" value="1"/>
</dbReference>
<dbReference type="Gene3D" id="3.30.70.60">
    <property type="match status" value="1"/>
</dbReference>
<dbReference type="HAMAP" id="MF_00360">
    <property type="entry name" value="Ribosomal_bS6"/>
    <property type="match status" value="1"/>
</dbReference>
<dbReference type="InterPro" id="IPR000529">
    <property type="entry name" value="Ribosomal_bS6"/>
</dbReference>
<dbReference type="InterPro" id="IPR020815">
    <property type="entry name" value="Ribosomal_bS6_CS"/>
</dbReference>
<dbReference type="InterPro" id="IPR035980">
    <property type="entry name" value="Ribosomal_bS6_sf"/>
</dbReference>
<dbReference type="InterPro" id="IPR020814">
    <property type="entry name" value="Ribosomal_S6_plastid/chlpt"/>
</dbReference>
<dbReference type="InterPro" id="IPR014717">
    <property type="entry name" value="Transl_elong_EF1B/ribsomal_bS6"/>
</dbReference>
<dbReference type="NCBIfam" id="TIGR00166">
    <property type="entry name" value="S6"/>
    <property type="match status" value="1"/>
</dbReference>
<dbReference type="PANTHER" id="PTHR21011">
    <property type="entry name" value="MITOCHONDRIAL 28S RIBOSOMAL PROTEIN S6"/>
    <property type="match status" value="1"/>
</dbReference>
<dbReference type="PANTHER" id="PTHR21011:SF1">
    <property type="entry name" value="SMALL RIBOSOMAL SUBUNIT PROTEIN BS6M"/>
    <property type="match status" value="1"/>
</dbReference>
<dbReference type="Pfam" id="PF01250">
    <property type="entry name" value="Ribosomal_S6"/>
    <property type="match status" value="1"/>
</dbReference>
<dbReference type="SUPFAM" id="SSF54995">
    <property type="entry name" value="Ribosomal protein S6"/>
    <property type="match status" value="1"/>
</dbReference>
<dbReference type="PROSITE" id="PS01048">
    <property type="entry name" value="RIBOSOMAL_S6"/>
    <property type="match status" value="1"/>
</dbReference>